<proteinExistence type="evidence at protein level"/>
<feature type="chain" id="PRO_0000058554" description="Intermembrane transport protein PqiA">
    <location>
        <begin position="1"/>
        <end position="417"/>
    </location>
</feature>
<feature type="topological domain" description="Cytoplasmic" evidence="3">
    <location>
        <begin position="1"/>
        <end position="50"/>
    </location>
</feature>
<feature type="transmembrane region" description="Helical" evidence="1">
    <location>
        <begin position="51"/>
        <end position="71"/>
    </location>
</feature>
<feature type="topological domain" description="Periplasmic" evidence="3">
    <location>
        <begin position="72"/>
        <end position="101"/>
    </location>
</feature>
<feature type="transmembrane region" description="Helical" evidence="1">
    <location>
        <begin position="102"/>
        <end position="122"/>
    </location>
</feature>
<feature type="topological domain" description="Cytoplasmic" evidence="3">
    <location>
        <begin position="123"/>
        <end position="256"/>
    </location>
</feature>
<feature type="transmembrane region" description="Helical" evidence="1">
    <location>
        <begin position="257"/>
        <end position="277"/>
    </location>
</feature>
<feature type="topological domain" description="Periplasmic" evidence="3">
    <location>
        <begin position="278"/>
        <end position="284"/>
    </location>
</feature>
<feature type="transmembrane region" description="Helical" evidence="1">
    <location>
        <begin position="285"/>
        <end position="305"/>
    </location>
</feature>
<feature type="topological domain" description="Cytoplasmic" evidence="3">
    <location>
        <begin position="306"/>
        <end position="346"/>
    </location>
</feature>
<feature type="transmembrane region" description="Helical" evidence="1">
    <location>
        <begin position="347"/>
        <end position="367"/>
    </location>
</feature>
<feature type="topological domain" description="Periplasmic" evidence="3">
    <location>
        <begin position="368"/>
        <end position="370"/>
    </location>
</feature>
<feature type="transmembrane region" description="Helical" evidence="1">
    <location>
        <begin position="371"/>
        <end position="391"/>
    </location>
</feature>
<feature type="topological domain" description="Cytoplasmic" evidence="3">
    <location>
        <begin position="392"/>
        <end position="417"/>
    </location>
</feature>
<feature type="sequence conflict" description="In Ref. 1; CAA57256." evidence="7" ref="1">
    <original>SERMHLIYEVVEFVGRWSMIDVFVIAVLSALVRMGGLMSIYPAMGALMFALVVIMTMFSAMTFDPRLSWDRQPESEHEES</original>
    <variation>RKECI</variation>
    <location>
        <begin position="338"/>
        <end position="417"/>
    </location>
</feature>
<organism>
    <name type="scientific">Escherichia coli (strain K12)</name>
    <dbReference type="NCBI Taxonomy" id="83333"/>
    <lineage>
        <taxon>Bacteria</taxon>
        <taxon>Pseudomonadati</taxon>
        <taxon>Pseudomonadota</taxon>
        <taxon>Gammaproteobacteria</taxon>
        <taxon>Enterobacterales</taxon>
        <taxon>Enterobacteriaceae</taxon>
        <taxon>Escherichia</taxon>
    </lineage>
</organism>
<reference key="1">
    <citation type="journal article" date="1995" name="J. Bacteriol.">
        <title>Isolation of a novel paraquat-inducible (pqi) gene regulated by the soxRS locus in Escherichia coli.</title>
        <authorList>
            <person name="Koh Y.-S."/>
            <person name="Roe J.-H."/>
        </authorList>
    </citation>
    <scope>NUCLEOTIDE SEQUENCE [GENOMIC DNA]</scope>
    <scope>INDUCTION</scope>
    <source>
        <strain>K12 / W3110 / ATCC 27325 / DSM 5911</strain>
    </source>
</reference>
<reference key="2">
    <citation type="journal article" date="1996" name="DNA Res.">
        <title>A 718-kb DNA sequence of the Escherichia coli K-12 genome corresponding to the 12.7-28.0 min region on the linkage map.</title>
        <authorList>
            <person name="Oshima T."/>
            <person name="Aiba H."/>
            <person name="Baba T."/>
            <person name="Fujita K."/>
            <person name="Hayashi K."/>
            <person name="Honjo A."/>
            <person name="Ikemoto K."/>
            <person name="Inada T."/>
            <person name="Itoh T."/>
            <person name="Kajihara M."/>
            <person name="Kanai K."/>
            <person name="Kashimoto K."/>
            <person name="Kimura S."/>
            <person name="Kitagawa M."/>
            <person name="Makino K."/>
            <person name="Masuda S."/>
            <person name="Miki T."/>
            <person name="Mizobuchi K."/>
            <person name="Mori H."/>
            <person name="Motomura K."/>
            <person name="Nakamura Y."/>
            <person name="Nashimoto H."/>
            <person name="Nishio Y."/>
            <person name="Saito N."/>
            <person name="Sampei G."/>
            <person name="Seki Y."/>
            <person name="Tagami H."/>
            <person name="Takemoto K."/>
            <person name="Wada C."/>
            <person name="Yamamoto Y."/>
            <person name="Yano M."/>
            <person name="Horiuchi T."/>
        </authorList>
    </citation>
    <scope>NUCLEOTIDE SEQUENCE [GENOMIC DNA]</scope>
    <source>
        <strain>K12</strain>
    </source>
</reference>
<reference key="3">
    <citation type="journal article" date="1997" name="Science">
        <title>The complete genome sequence of Escherichia coli K-12.</title>
        <authorList>
            <person name="Blattner F.R."/>
            <person name="Plunkett G. III"/>
            <person name="Bloch C.A."/>
            <person name="Perna N.T."/>
            <person name="Burland V."/>
            <person name="Riley M."/>
            <person name="Collado-Vides J."/>
            <person name="Glasner J.D."/>
            <person name="Rode C.K."/>
            <person name="Mayhew G.F."/>
            <person name="Gregor J."/>
            <person name="Davis N.W."/>
            <person name="Kirkpatrick H.A."/>
            <person name="Goeden M.A."/>
            <person name="Rose D.J."/>
            <person name="Mau B."/>
            <person name="Shao Y."/>
        </authorList>
    </citation>
    <scope>NUCLEOTIDE SEQUENCE [LARGE SCALE GENOMIC DNA]</scope>
    <source>
        <strain>K12 / MG1655 / ATCC 47076</strain>
    </source>
</reference>
<reference key="4">
    <citation type="journal article" date="2006" name="Mol. Syst. Biol.">
        <title>Highly accurate genome sequences of Escherichia coli K-12 strains MG1655 and W3110.</title>
        <authorList>
            <person name="Hayashi K."/>
            <person name="Morooka N."/>
            <person name="Yamamoto Y."/>
            <person name="Fujita K."/>
            <person name="Isono K."/>
            <person name="Choi S."/>
            <person name="Ohtsubo E."/>
            <person name="Baba T."/>
            <person name="Wanner B.L."/>
            <person name="Mori H."/>
            <person name="Horiuchi T."/>
        </authorList>
    </citation>
    <scope>NUCLEOTIDE SEQUENCE [LARGE SCALE GENOMIC DNA]</scope>
    <source>
        <strain>K12 / W3110 / ATCC 27325 / DSM 5911</strain>
    </source>
</reference>
<reference key="5">
    <citation type="journal article" date="2005" name="Science">
        <title>Global topology analysis of the Escherichia coli inner membrane proteome.</title>
        <authorList>
            <person name="Daley D.O."/>
            <person name="Rapp M."/>
            <person name="Granseth E."/>
            <person name="Melen K."/>
            <person name="Drew D."/>
            <person name="von Heijne G."/>
        </authorList>
    </citation>
    <scope>SUBCELLULAR LOCATION</scope>
    <source>
        <strain>K12 / MG1655 / ATCC 47076</strain>
    </source>
</reference>
<reference key="6">
    <citation type="journal article" date="2017" name="J. Bacteriol.">
        <title>pqiABC and yebST, putative mce operons of Escherichia coli, encode transport pathways and contribute to membrane integrity.</title>
        <authorList>
            <person name="Nakayama T."/>
            <person name="Zhang-Akiyama Q.M."/>
        </authorList>
    </citation>
    <scope>FUNCTION</scope>
    <scope>SUBUNIT</scope>
    <scope>SUBCELLULAR LOCATION</scope>
    <scope>TOPOLOGY</scope>
</reference>
<name>PQIA_ECOLI</name>
<dbReference type="EMBL" id="X81561">
    <property type="protein sequence ID" value="CAA57256.1"/>
    <property type="molecule type" value="Genomic_DNA"/>
</dbReference>
<dbReference type="EMBL" id="U00096">
    <property type="protein sequence ID" value="AAC74036.1"/>
    <property type="molecule type" value="Genomic_DNA"/>
</dbReference>
<dbReference type="EMBL" id="AP009048">
    <property type="protein sequence ID" value="BAA35708.1"/>
    <property type="molecule type" value="Genomic_DNA"/>
</dbReference>
<dbReference type="PIR" id="E64835">
    <property type="entry name" value="E64835"/>
</dbReference>
<dbReference type="RefSeq" id="NP_415470.1">
    <property type="nucleotide sequence ID" value="NC_000913.3"/>
</dbReference>
<dbReference type="RefSeq" id="WP_000333176.1">
    <property type="nucleotide sequence ID" value="NZ_STEB01000006.1"/>
</dbReference>
<dbReference type="BioGRID" id="4260027">
    <property type="interactions" value="15"/>
</dbReference>
<dbReference type="FunCoup" id="P0AFL9">
    <property type="interactions" value="52"/>
</dbReference>
<dbReference type="IntAct" id="P0AFL9">
    <property type="interactions" value="2"/>
</dbReference>
<dbReference type="STRING" id="511145.b0950"/>
<dbReference type="TCDB" id="9.A.69.1.1">
    <property type="family name" value="the intermembrane phospholipid translocase (impl-t) family"/>
</dbReference>
<dbReference type="PaxDb" id="511145-b0950"/>
<dbReference type="EnsemblBacteria" id="AAC74036">
    <property type="protein sequence ID" value="AAC74036"/>
    <property type="gene ID" value="b0950"/>
</dbReference>
<dbReference type="GeneID" id="93776464"/>
<dbReference type="GeneID" id="944999"/>
<dbReference type="KEGG" id="ecj:JW0933"/>
<dbReference type="KEGG" id="eco:b0950"/>
<dbReference type="KEGG" id="ecoc:C3026_05815"/>
<dbReference type="PATRIC" id="fig|1411691.4.peg.1324"/>
<dbReference type="EchoBASE" id="EB2794"/>
<dbReference type="eggNOG" id="COG2995">
    <property type="taxonomic scope" value="Bacteria"/>
</dbReference>
<dbReference type="HOGENOM" id="CLU_041903_0_1_6"/>
<dbReference type="InParanoid" id="P0AFL9"/>
<dbReference type="OMA" id="PWMMADV"/>
<dbReference type="OrthoDB" id="9800207at2"/>
<dbReference type="PhylomeDB" id="P0AFL9"/>
<dbReference type="BioCyc" id="EcoCyc:G6490-MONOMER"/>
<dbReference type="PRO" id="PR:P0AFL9"/>
<dbReference type="Proteomes" id="UP000000625">
    <property type="component" value="Chromosome"/>
</dbReference>
<dbReference type="GO" id="GO:0016020">
    <property type="term" value="C:membrane"/>
    <property type="evidence" value="ECO:0000314"/>
    <property type="project" value="EcoCyc"/>
</dbReference>
<dbReference type="GO" id="GO:0005886">
    <property type="term" value="C:plasma membrane"/>
    <property type="evidence" value="ECO:0000314"/>
    <property type="project" value="EcoCyc"/>
</dbReference>
<dbReference type="GO" id="GO:0061024">
    <property type="term" value="P:membrane organization"/>
    <property type="evidence" value="ECO:0000269"/>
    <property type="project" value="EcoCyc"/>
</dbReference>
<dbReference type="GO" id="GO:0006950">
    <property type="term" value="P:response to stress"/>
    <property type="evidence" value="ECO:0000270"/>
    <property type="project" value="EcoCyc"/>
</dbReference>
<dbReference type="InterPro" id="IPR007498">
    <property type="entry name" value="PqiA-like"/>
</dbReference>
<dbReference type="InterPro" id="IPR005219">
    <property type="entry name" value="PqiA-like_proteobact"/>
</dbReference>
<dbReference type="InterPro" id="IPR051800">
    <property type="entry name" value="PqiA-PqiB_transport"/>
</dbReference>
<dbReference type="NCBIfam" id="TIGR00155">
    <property type="entry name" value="pqiA_fam"/>
    <property type="match status" value="1"/>
</dbReference>
<dbReference type="NCBIfam" id="NF011683">
    <property type="entry name" value="PRK15103.1"/>
    <property type="match status" value="1"/>
</dbReference>
<dbReference type="PANTHER" id="PTHR30462:SF3">
    <property type="entry name" value="INTERMEMBRANE TRANSPORT PROTEIN PQIA"/>
    <property type="match status" value="1"/>
</dbReference>
<dbReference type="PANTHER" id="PTHR30462">
    <property type="entry name" value="INTERMEMBRANE TRANSPORT PROTEIN PQIB-RELATED"/>
    <property type="match status" value="1"/>
</dbReference>
<dbReference type="Pfam" id="PF04403">
    <property type="entry name" value="PqiA"/>
    <property type="match status" value="2"/>
</dbReference>
<sequence>MCEHHHAAKHILCSQCDMLVALPRLEHGQKAACPRCGTTLTVAWDAPRQRPTAYALAALFMLLLSNLFPFVNMNVAGVTSEITLLEIPGVLFSEDYASLGTFFLLFVQLVPAFCLITILLLVNRAELPVRLKEQLARVLFQLKTWGMAEIFLAGVLVSFVKLMAYGSIGVGSSFLPWCLFCVLQLRAFQCVDRRWLWDDIAPMPELRQPLKPGVTGIRQGLRSCSCCTAILPADEPVCPRCSTKGYVRRRNSLQWTLALLVTSIMLYLPANILPIMVTDLLGSKMPSTILAGVILLWSEGSYPVAAVIFLASIMVPTLKMIAIAWLCWDAKGHGKRDSERMHLIYEVVEFVGRWSMIDVFVIAVLSALVRMGGLMSIYPAMGALMFALVVIMTMFSAMTFDPRLSWDRQPESEHEES</sequence>
<protein>
    <recommendedName>
        <fullName evidence="7">Intermembrane transport protein PqiA</fullName>
    </recommendedName>
    <alternativeName>
        <fullName>Paraquat-inducible protein A</fullName>
    </alternativeName>
</protein>
<keyword id="KW-0997">Cell inner membrane</keyword>
<keyword id="KW-1003">Cell membrane</keyword>
<keyword id="KW-0472">Membrane</keyword>
<keyword id="KW-1185">Reference proteome</keyword>
<keyword id="KW-0812">Transmembrane</keyword>
<keyword id="KW-1133">Transmembrane helix</keyword>
<keyword id="KW-0813">Transport</keyword>
<evidence type="ECO:0000255" key="1"/>
<evidence type="ECO:0000269" key="2">
    <source>
    </source>
</evidence>
<evidence type="ECO:0000269" key="3">
    <source>
    </source>
</evidence>
<evidence type="ECO:0000269" key="4">
    <source>
    </source>
</evidence>
<evidence type="ECO:0000303" key="5">
    <source>
    </source>
</evidence>
<evidence type="ECO:0000303" key="6">
    <source>
    </source>
</evidence>
<evidence type="ECO:0000305" key="7"/>
<comment type="function">
    <text evidence="3">Component of a transport pathway that contributes to membrane integrity.</text>
</comment>
<comment type="subunit">
    <text evidence="3">May form a complex composed of PqiA, PqiB and PqiC.</text>
</comment>
<comment type="subcellular location">
    <subcellularLocation>
        <location evidence="2 3">Cell inner membrane</location>
        <topology evidence="3">Multi-pass membrane protein</topology>
    </subcellularLocation>
</comment>
<comment type="induction">
    <text evidence="4">By paraquat.</text>
</comment>
<comment type="similarity">
    <text evidence="7">Belongs to the PqiA family.</text>
</comment>
<accession>P0AFL9</accession>
<accession>P43670</accession>
<accession>P77566</accession>
<gene>
    <name evidence="5" type="primary">pqiA</name>
    <name evidence="6" type="synonym">pqi5A</name>
    <name type="ordered locus">b0950</name>
    <name type="ordered locus">JW0933</name>
</gene>